<protein>
    <recommendedName>
        <fullName evidence="1">Enolase</fullName>
        <ecNumber evidence="1">4.2.1.11</ecNumber>
    </recommendedName>
    <alternativeName>
        <fullName evidence="1">2-phospho-D-glycerate hydro-lyase</fullName>
    </alternativeName>
    <alternativeName>
        <fullName evidence="1">2-phosphoglycerate dehydratase</fullName>
    </alternativeName>
</protein>
<feature type="chain" id="PRO_0000280864" description="Enolase">
    <location>
        <begin position="1"/>
        <end position="429"/>
    </location>
</feature>
<feature type="active site" description="Proton donor" evidence="1">
    <location>
        <position position="204"/>
    </location>
</feature>
<feature type="active site" description="Proton acceptor" evidence="1">
    <location>
        <position position="335"/>
    </location>
</feature>
<feature type="binding site" evidence="1">
    <location>
        <position position="162"/>
    </location>
    <ligand>
        <name>(2R)-2-phosphoglycerate</name>
        <dbReference type="ChEBI" id="CHEBI:58289"/>
    </ligand>
</feature>
<feature type="binding site" evidence="1">
    <location>
        <position position="241"/>
    </location>
    <ligand>
        <name>Mg(2+)</name>
        <dbReference type="ChEBI" id="CHEBI:18420"/>
    </ligand>
</feature>
<feature type="binding site" evidence="1">
    <location>
        <position position="283"/>
    </location>
    <ligand>
        <name>Mg(2+)</name>
        <dbReference type="ChEBI" id="CHEBI:18420"/>
    </ligand>
</feature>
<feature type="binding site" evidence="1">
    <location>
        <position position="310"/>
    </location>
    <ligand>
        <name>Mg(2+)</name>
        <dbReference type="ChEBI" id="CHEBI:18420"/>
    </ligand>
</feature>
<feature type="binding site" evidence="1">
    <location>
        <position position="335"/>
    </location>
    <ligand>
        <name>(2R)-2-phosphoglycerate</name>
        <dbReference type="ChEBI" id="CHEBI:58289"/>
    </ligand>
</feature>
<feature type="binding site" evidence="1">
    <location>
        <position position="364"/>
    </location>
    <ligand>
        <name>(2R)-2-phosphoglycerate</name>
        <dbReference type="ChEBI" id="CHEBI:58289"/>
    </ligand>
</feature>
<feature type="binding site" evidence="1">
    <location>
        <position position="365"/>
    </location>
    <ligand>
        <name>(2R)-2-phosphoglycerate</name>
        <dbReference type="ChEBI" id="CHEBI:58289"/>
    </ligand>
</feature>
<feature type="binding site" evidence="1">
    <location>
        <position position="386"/>
    </location>
    <ligand>
        <name>(2R)-2-phosphoglycerate</name>
        <dbReference type="ChEBI" id="CHEBI:58289"/>
    </ligand>
</feature>
<evidence type="ECO:0000255" key="1">
    <source>
        <dbReference type="HAMAP-Rule" id="MF_00318"/>
    </source>
</evidence>
<sequence>MPIIEQVGAREILDSRGNPTVEVEIALTDGTFARAAVPSGASTGEHEAVELRDGGERYGGKGVQKAVQAVLDEIGPAVIGLNADDQRLVDQALVDLDGTPDKSRLGGNAILGVSLAVAKAAADSAELPLFRYLGGPNAHILPVPMMNILNGGAHADTAVDIQEFMVAPIGAPSFAEALRWGAEVYHSLKSVLKKEGLSTGLGDEGGFAPDVAGTTAALDLIGRAIESAGFKLGTDVALALDAAATEFYSDGTGYKFEGSTRTAEQMAEFYAGLLGAYPLVSIEDPLSEDDWDGWAALTASIGDRVQLVGDDVFVTNPERLEEGIEKGVANALLVKVNQIGTLTETLDAVALAHHSGYRTMMSHRSGETEDTTIADLAVAVGSGQIKTGAPARSERVAKYNQLLRIEEALGDAARYAGDLAFPRFALETR</sequence>
<reference key="1">
    <citation type="submission" date="2006-10" db="EMBL/GenBank/DDBJ databases">
        <authorList>
            <person name="Fleischmann R.D."/>
            <person name="Dodson R.J."/>
            <person name="Haft D.H."/>
            <person name="Merkel J.S."/>
            <person name="Nelson W.C."/>
            <person name="Fraser C.M."/>
        </authorList>
    </citation>
    <scope>NUCLEOTIDE SEQUENCE [LARGE SCALE GENOMIC DNA]</scope>
    <source>
        <strain>104</strain>
    </source>
</reference>
<proteinExistence type="inferred from homology"/>
<keyword id="KW-0963">Cytoplasm</keyword>
<keyword id="KW-0324">Glycolysis</keyword>
<keyword id="KW-0456">Lyase</keyword>
<keyword id="KW-0460">Magnesium</keyword>
<keyword id="KW-0479">Metal-binding</keyword>
<keyword id="KW-0964">Secreted</keyword>
<dbReference type="EC" id="4.2.1.11" evidence="1"/>
<dbReference type="EMBL" id="CP000479">
    <property type="protein sequence ID" value="ABK68973.1"/>
    <property type="molecule type" value="Genomic_DNA"/>
</dbReference>
<dbReference type="RefSeq" id="WP_003877542.1">
    <property type="nucleotide sequence ID" value="NC_008595.1"/>
</dbReference>
<dbReference type="SMR" id="A0QBX4"/>
<dbReference type="GeneID" id="75268977"/>
<dbReference type="KEGG" id="mav:MAV_1164"/>
<dbReference type="HOGENOM" id="CLU_031223_2_1_11"/>
<dbReference type="UniPathway" id="UPA00109">
    <property type="reaction ID" value="UER00187"/>
</dbReference>
<dbReference type="Proteomes" id="UP000001574">
    <property type="component" value="Chromosome"/>
</dbReference>
<dbReference type="GO" id="GO:0009986">
    <property type="term" value="C:cell surface"/>
    <property type="evidence" value="ECO:0007669"/>
    <property type="project" value="UniProtKB-SubCell"/>
</dbReference>
<dbReference type="GO" id="GO:0005576">
    <property type="term" value="C:extracellular region"/>
    <property type="evidence" value="ECO:0007669"/>
    <property type="project" value="UniProtKB-SubCell"/>
</dbReference>
<dbReference type="GO" id="GO:0000015">
    <property type="term" value="C:phosphopyruvate hydratase complex"/>
    <property type="evidence" value="ECO:0007669"/>
    <property type="project" value="InterPro"/>
</dbReference>
<dbReference type="GO" id="GO:0000287">
    <property type="term" value="F:magnesium ion binding"/>
    <property type="evidence" value="ECO:0007669"/>
    <property type="project" value="UniProtKB-UniRule"/>
</dbReference>
<dbReference type="GO" id="GO:0004634">
    <property type="term" value="F:phosphopyruvate hydratase activity"/>
    <property type="evidence" value="ECO:0007669"/>
    <property type="project" value="UniProtKB-UniRule"/>
</dbReference>
<dbReference type="GO" id="GO:0006096">
    <property type="term" value="P:glycolytic process"/>
    <property type="evidence" value="ECO:0007669"/>
    <property type="project" value="UniProtKB-UniRule"/>
</dbReference>
<dbReference type="CDD" id="cd03313">
    <property type="entry name" value="enolase"/>
    <property type="match status" value="1"/>
</dbReference>
<dbReference type="FunFam" id="3.20.20.120:FF:000001">
    <property type="entry name" value="Enolase"/>
    <property type="match status" value="1"/>
</dbReference>
<dbReference type="FunFam" id="3.30.390.10:FF:000001">
    <property type="entry name" value="Enolase"/>
    <property type="match status" value="1"/>
</dbReference>
<dbReference type="Gene3D" id="3.20.20.120">
    <property type="entry name" value="Enolase-like C-terminal domain"/>
    <property type="match status" value="1"/>
</dbReference>
<dbReference type="Gene3D" id="3.30.390.10">
    <property type="entry name" value="Enolase-like, N-terminal domain"/>
    <property type="match status" value="1"/>
</dbReference>
<dbReference type="HAMAP" id="MF_00318">
    <property type="entry name" value="Enolase"/>
    <property type="match status" value="1"/>
</dbReference>
<dbReference type="InterPro" id="IPR000941">
    <property type="entry name" value="Enolase"/>
</dbReference>
<dbReference type="InterPro" id="IPR036849">
    <property type="entry name" value="Enolase-like_C_sf"/>
</dbReference>
<dbReference type="InterPro" id="IPR029017">
    <property type="entry name" value="Enolase-like_N"/>
</dbReference>
<dbReference type="InterPro" id="IPR020810">
    <property type="entry name" value="Enolase_C"/>
</dbReference>
<dbReference type="InterPro" id="IPR020809">
    <property type="entry name" value="Enolase_CS"/>
</dbReference>
<dbReference type="InterPro" id="IPR020811">
    <property type="entry name" value="Enolase_N"/>
</dbReference>
<dbReference type="NCBIfam" id="TIGR01060">
    <property type="entry name" value="eno"/>
    <property type="match status" value="1"/>
</dbReference>
<dbReference type="PANTHER" id="PTHR11902">
    <property type="entry name" value="ENOLASE"/>
    <property type="match status" value="1"/>
</dbReference>
<dbReference type="PANTHER" id="PTHR11902:SF1">
    <property type="entry name" value="ENOLASE"/>
    <property type="match status" value="1"/>
</dbReference>
<dbReference type="Pfam" id="PF00113">
    <property type="entry name" value="Enolase_C"/>
    <property type="match status" value="1"/>
</dbReference>
<dbReference type="Pfam" id="PF03952">
    <property type="entry name" value="Enolase_N"/>
    <property type="match status" value="1"/>
</dbReference>
<dbReference type="PIRSF" id="PIRSF001400">
    <property type="entry name" value="Enolase"/>
    <property type="match status" value="1"/>
</dbReference>
<dbReference type="PRINTS" id="PR00148">
    <property type="entry name" value="ENOLASE"/>
</dbReference>
<dbReference type="SFLD" id="SFLDF00002">
    <property type="entry name" value="enolase"/>
    <property type="match status" value="1"/>
</dbReference>
<dbReference type="SFLD" id="SFLDG00178">
    <property type="entry name" value="enolase"/>
    <property type="match status" value="1"/>
</dbReference>
<dbReference type="SMART" id="SM01192">
    <property type="entry name" value="Enolase_C"/>
    <property type="match status" value="1"/>
</dbReference>
<dbReference type="SMART" id="SM01193">
    <property type="entry name" value="Enolase_N"/>
    <property type="match status" value="1"/>
</dbReference>
<dbReference type="SUPFAM" id="SSF51604">
    <property type="entry name" value="Enolase C-terminal domain-like"/>
    <property type="match status" value="1"/>
</dbReference>
<dbReference type="SUPFAM" id="SSF54826">
    <property type="entry name" value="Enolase N-terminal domain-like"/>
    <property type="match status" value="1"/>
</dbReference>
<dbReference type="PROSITE" id="PS00164">
    <property type="entry name" value="ENOLASE"/>
    <property type="match status" value="1"/>
</dbReference>
<accession>A0QBX4</accession>
<name>ENO_MYCA1</name>
<organism>
    <name type="scientific">Mycobacterium avium (strain 104)</name>
    <dbReference type="NCBI Taxonomy" id="243243"/>
    <lineage>
        <taxon>Bacteria</taxon>
        <taxon>Bacillati</taxon>
        <taxon>Actinomycetota</taxon>
        <taxon>Actinomycetes</taxon>
        <taxon>Mycobacteriales</taxon>
        <taxon>Mycobacteriaceae</taxon>
        <taxon>Mycobacterium</taxon>
        <taxon>Mycobacterium avium complex (MAC)</taxon>
    </lineage>
</organism>
<gene>
    <name evidence="1" type="primary">eno</name>
    <name type="ordered locus">MAV_1164</name>
</gene>
<comment type="function">
    <text evidence="1">Catalyzes the reversible conversion of 2-phosphoglycerate (2-PG) into phosphoenolpyruvate (PEP). It is essential for the degradation of carbohydrates via glycolysis.</text>
</comment>
<comment type="catalytic activity">
    <reaction evidence="1">
        <text>(2R)-2-phosphoglycerate = phosphoenolpyruvate + H2O</text>
        <dbReference type="Rhea" id="RHEA:10164"/>
        <dbReference type="ChEBI" id="CHEBI:15377"/>
        <dbReference type="ChEBI" id="CHEBI:58289"/>
        <dbReference type="ChEBI" id="CHEBI:58702"/>
        <dbReference type="EC" id="4.2.1.11"/>
    </reaction>
</comment>
<comment type="cofactor">
    <cofactor evidence="1">
        <name>Mg(2+)</name>
        <dbReference type="ChEBI" id="CHEBI:18420"/>
    </cofactor>
    <text evidence="1">Binds a second Mg(2+) ion via substrate during catalysis.</text>
</comment>
<comment type="pathway">
    <text evidence="1">Carbohydrate degradation; glycolysis; pyruvate from D-glyceraldehyde 3-phosphate: step 4/5.</text>
</comment>
<comment type="subcellular location">
    <subcellularLocation>
        <location evidence="1">Cytoplasm</location>
    </subcellularLocation>
    <subcellularLocation>
        <location evidence="1">Secreted</location>
    </subcellularLocation>
    <subcellularLocation>
        <location evidence="1">Cell surface</location>
    </subcellularLocation>
    <text evidence="1">Fractions of enolase are present in both the cytoplasm and on the cell surface.</text>
</comment>
<comment type="similarity">
    <text evidence="1">Belongs to the enolase family.</text>
</comment>